<dbReference type="EMBL" id="X06482">
    <property type="protein sequence ID" value="CAA29776.1"/>
    <property type="molecule type" value="Genomic_DNA"/>
</dbReference>
<dbReference type="EMBL" id="M33022">
    <property type="protein sequence ID" value="AAA52640.1"/>
    <property type="molecule type" value="Genomic_DNA"/>
</dbReference>
<dbReference type="EMBL" id="DQ431198">
    <property type="protein sequence ID" value="ABD95912.1"/>
    <property type="molecule type" value="Genomic_DNA"/>
</dbReference>
<dbReference type="EMBL" id="AE006462">
    <property type="protein sequence ID" value="AAK61217.1"/>
    <property type="molecule type" value="Genomic_DNA"/>
</dbReference>
<dbReference type="EMBL" id="BC056686">
    <property type="protein sequence ID" value="AAH56686.1"/>
    <property type="molecule type" value="mRNA"/>
</dbReference>
<dbReference type="EMBL" id="M91453">
    <property type="protein sequence ID" value="AAA58362.1"/>
    <property type="molecule type" value="Genomic_DNA"/>
</dbReference>
<dbReference type="CCDS" id="CCDS10400.1"/>
<dbReference type="PIR" id="I52337">
    <property type="entry name" value="HTHU"/>
</dbReference>
<dbReference type="RefSeq" id="NP_005322.1">
    <property type="nucleotide sequence ID" value="NM_005331.5"/>
</dbReference>
<dbReference type="SMR" id="P09105"/>
<dbReference type="BioGRID" id="109299">
    <property type="interactions" value="28"/>
</dbReference>
<dbReference type="FunCoup" id="P09105">
    <property type="interactions" value="12"/>
</dbReference>
<dbReference type="IntAct" id="P09105">
    <property type="interactions" value="26"/>
</dbReference>
<dbReference type="STRING" id="9606.ENSP00000199708"/>
<dbReference type="iPTMnet" id="P09105"/>
<dbReference type="PhosphoSitePlus" id="P09105"/>
<dbReference type="BioMuta" id="HBQ1"/>
<dbReference type="DMDM" id="122330"/>
<dbReference type="jPOST" id="P09105"/>
<dbReference type="MassIVE" id="P09105"/>
<dbReference type="PaxDb" id="9606-ENSP00000199708"/>
<dbReference type="PeptideAtlas" id="P09105"/>
<dbReference type="ProteomicsDB" id="52199"/>
<dbReference type="Pumba" id="P09105"/>
<dbReference type="Antibodypedia" id="22527">
    <property type="antibodies" value="150 antibodies from 26 providers"/>
</dbReference>
<dbReference type="DNASU" id="3049"/>
<dbReference type="Ensembl" id="ENST00000199708.3">
    <property type="protein sequence ID" value="ENSP00000199708.2"/>
    <property type="gene ID" value="ENSG00000086506.3"/>
</dbReference>
<dbReference type="GeneID" id="3049"/>
<dbReference type="KEGG" id="hsa:3049"/>
<dbReference type="MANE-Select" id="ENST00000199708.3">
    <property type="protein sequence ID" value="ENSP00000199708.2"/>
    <property type="RefSeq nucleotide sequence ID" value="NM_005331.5"/>
    <property type="RefSeq protein sequence ID" value="NP_005322.1"/>
</dbReference>
<dbReference type="UCSC" id="uc002cfz.4">
    <property type="organism name" value="human"/>
</dbReference>
<dbReference type="AGR" id="HGNC:4833"/>
<dbReference type="CTD" id="3049"/>
<dbReference type="DisGeNET" id="3049"/>
<dbReference type="GeneCards" id="HBQ1"/>
<dbReference type="HGNC" id="HGNC:4833">
    <property type="gene designation" value="HBQ1"/>
</dbReference>
<dbReference type="HPA" id="ENSG00000086506">
    <property type="expression patterns" value="Group enriched (bone marrow, brain)"/>
</dbReference>
<dbReference type="MIM" id="142240">
    <property type="type" value="gene"/>
</dbReference>
<dbReference type="neXtProt" id="NX_P09105"/>
<dbReference type="OpenTargets" id="ENSG00000086506"/>
<dbReference type="PharmGKB" id="PA29208"/>
<dbReference type="VEuPathDB" id="HostDB:ENSG00000086506"/>
<dbReference type="eggNOG" id="KOG3378">
    <property type="taxonomic scope" value="Eukaryota"/>
</dbReference>
<dbReference type="GeneTree" id="ENSGT00940000162598"/>
<dbReference type="HOGENOM" id="CLU_003827_10_2_1"/>
<dbReference type="InParanoid" id="P09105"/>
<dbReference type="OMA" id="FFKLLCH"/>
<dbReference type="OrthoDB" id="8751793at2759"/>
<dbReference type="PAN-GO" id="P09105">
    <property type="GO annotations" value="9 GO annotations based on evolutionary models"/>
</dbReference>
<dbReference type="PhylomeDB" id="P09105"/>
<dbReference type="TreeFam" id="TF332328"/>
<dbReference type="PathwayCommons" id="P09105"/>
<dbReference type="SignaLink" id="P09105"/>
<dbReference type="BioGRID-ORCS" id="3049">
    <property type="hits" value="17 hits in 1149 CRISPR screens"/>
</dbReference>
<dbReference type="GeneWiki" id="HBQ1"/>
<dbReference type="GenomeRNAi" id="3049"/>
<dbReference type="Pharos" id="P09105">
    <property type="development level" value="Tbio"/>
</dbReference>
<dbReference type="PRO" id="PR:P09105"/>
<dbReference type="Proteomes" id="UP000005640">
    <property type="component" value="Chromosome 16"/>
</dbReference>
<dbReference type="RNAct" id="P09105">
    <property type="molecule type" value="protein"/>
</dbReference>
<dbReference type="Bgee" id="ENSG00000086506">
    <property type="expression patterns" value="Expressed in blood and 108 other cell types or tissues"/>
</dbReference>
<dbReference type="ExpressionAtlas" id="P09105">
    <property type="expression patterns" value="baseline and differential"/>
</dbReference>
<dbReference type="GO" id="GO:0031838">
    <property type="term" value="C:haptoglobin-hemoglobin complex"/>
    <property type="evidence" value="ECO:0000318"/>
    <property type="project" value="GO_Central"/>
</dbReference>
<dbReference type="GO" id="GO:0005833">
    <property type="term" value="C:hemoglobin complex"/>
    <property type="evidence" value="ECO:0000318"/>
    <property type="project" value="GO_Central"/>
</dbReference>
<dbReference type="GO" id="GO:0020037">
    <property type="term" value="F:heme binding"/>
    <property type="evidence" value="ECO:0000318"/>
    <property type="project" value="GO_Central"/>
</dbReference>
<dbReference type="GO" id="GO:0005506">
    <property type="term" value="F:iron ion binding"/>
    <property type="evidence" value="ECO:0007669"/>
    <property type="project" value="InterPro"/>
</dbReference>
<dbReference type="GO" id="GO:0019825">
    <property type="term" value="F:oxygen binding"/>
    <property type="evidence" value="ECO:0000318"/>
    <property type="project" value="GO_Central"/>
</dbReference>
<dbReference type="GO" id="GO:0005344">
    <property type="term" value="F:oxygen carrier activity"/>
    <property type="evidence" value="ECO:0000318"/>
    <property type="project" value="GO_Central"/>
</dbReference>
<dbReference type="GO" id="GO:0098869">
    <property type="term" value="P:cellular oxidant detoxification"/>
    <property type="evidence" value="ECO:0007669"/>
    <property type="project" value="GOC"/>
</dbReference>
<dbReference type="GO" id="GO:0042744">
    <property type="term" value="P:hydrogen peroxide catabolic process"/>
    <property type="evidence" value="ECO:0000318"/>
    <property type="project" value="GO_Central"/>
</dbReference>
<dbReference type="GO" id="GO:0015671">
    <property type="term" value="P:oxygen transport"/>
    <property type="evidence" value="ECO:0000304"/>
    <property type="project" value="ProtInc"/>
</dbReference>
<dbReference type="CDD" id="cd08927">
    <property type="entry name" value="Hb-alpha-like"/>
    <property type="match status" value="1"/>
</dbReference>
<dbReference type="FunFam" id="1.10.490.10:FF:000002">
    <property type="entry name" value="Hemoglobin subunit alpha"/>
    <property type="match status" value="1"/>
</dbReference>
<dbReference type="Gene3D" id="1.10.490.10">
    <property type="entry name" value="Globins"/>
    <property type="match status" value="1"/>
</dbReference>
<dbReference type="InterPro" id="IPR000971">
    <property type="entry name" value="Globin"/>
</dbReference>
<dbReference type="InterPro" id="IPR009050">
    <property type="entry name" value="Globin-like_sf"/>
</dbReference>
<dbReference type="InterPro" id="IPR012292">
    <property type="entry name" value="Globin/Proto"/>
</dbReference>
<dbReference type="InterPro" id="IPR002338">
    <property type="entry name" value="Hemoglobin_a-typ"/>
</dbReference>
<dbReference type="InterPro" id="IPR050056">
    <property type="entry name" value="Hemoglobin_oxygen_transport"/>
</dbReference>
<dbReference type="InterPro" id="IPR002339">
    <property type="entry name" value="Hemoglobin_pi"/>
</dbReference>
<dbReference type="PANTHER" id="PTHR11442">
    <property type="entry name" value="HEMOGLOBIN FAMILY MEMBER"/>
    <property type="match status" value="1"/>
</dbReference>
<dbReference type="PANTHER" id="PTHR11442:SF15">
    <property type="entry name" value="HEMOGLOBIN SUBUNIT THETA-1"/>
    <property type="match status" value="1"/>
</dbReference>
<dbReference type="Pfam" id="PF00042">
    <property type="entry name" value="Globin"/>
    <property type="match status" value="1"/>
</dbReference>
<dbReference type="PRINTS" id="PR00612">
    <property type="entry name" value="ALPHAHAEM"/>
</dbReference>
<dbReference type="PRINTS" id="PR00815">
    <property type="entry name" value="PIHAEM"/>
</dbReference>
<dbReference type="SUPFAM" id="SSF46458">
    <property type="entry name" value="Globin-like"/>
    <property type="match status" value="1"/>
</dbReference>
<dbReference type="PROSITE" id="PS01033">
    <property type="entry name" value="GLOBIN"/>
    <property type="match status" value="1"/>
</dbReference>
<protein>
    <recommendedName>
        <fullName>Hemoglobin subunit theta-1</fullName>
    </recommendedName>
    <alternativeName>
        <fullName>Hemoglobin theta-1 chain</fullName>
    </alternativeName>
    <alternativeName>
        <fullName>Theta-1-globin</fullName>
    </alternativeName>
</protein>
<feature type="chain" id="PRO_0000052846" description="Hemoglobin subunit theta-1">
    <location>
        <begin position="1"/>
        <end position="142"/>
    </location>
</feature>
<feature type="domain" description="Globin" evidence="1">
    <location>
        <begin position="2"/>
        <end position="142"/>
    </location>
</feature>
<feature type="binding site" description="distal binding residue">
    <location>
        <position position="59"/>
    </location>
    <ligand>
        <name>heme b</name>
        <dbReference type="ChEBI" id="CHEBI:60344"/>
    </ligand>
    <ligandPart>
        <name>Fe</name>
        <dbReference type="ChEBI" id="CHEBI:18248"/>
    </ligandPart>
</feature>
<feature type="binding site" description="proximal binding residue">
    <location>
        <position position="88"/>
    </location>
    <ligand>
        <name>heme b</name>
        <dbReference type="ChEBI" id="CHEBI:60344"/>
    </ligand>
    <ligandPart>
        <name>Fe</name>
        <dbReference type="ChEBI" id="CHEBI:18248"/>
    </ligandPart>
</feature>
<evidence type="ECO:0000255" key="1">
    <source>
        <dbReference type="PROSITE-ProRule" id="PRU00238"/>
    </source>
</evidence>
<accession>P09105</accession>
<accession>Q13723</accession>
<accession>Q1W6G5</accession>
<reference key="1">
    <citation type="journal article" date="1988" name="Nature">
        <title>Structure and expression of the human theta 1 globin gene.</title>
        <authorList>
            <person name="Hsu S.-L."/>
            <person name="Marks J."/>
            <person name="Shaw J.-P."/>
            <person name="Tam M."/>
            <person name="Higgs D.R."/>
            <person name="Shen C.C."/>
            <person name="Shen C.-K.J."/>
        </authorList>
    </citation>
    <scope>NUCLEOTIDE SEQUENCE [GENOMIC DNA]</scope>
</reference>
<reference key="2">
    <citation type="journal article" date="1988" name="Biochem. Genet.">
        <title>Nucleotide sequence of the human theta 1-globin gene.</title>
        <authorList>
            <person name="Gonzalez-Redondo J.M."/>
            <person name="Han I.S."/>
            <person name="Gu Y.C."/>
            <person name="Huisman T.H.J."/>
        </authorList>
    </citation>
    <scope>NUCLEOTIDE SEQUENCE [GENOMIC DNA]</scope>
</reference>
<reference key="3">
    <citation type="journal article" date="2006" name="Science">
        <title>A regulatory SNP causes a human genetic disease by creating a new transcriptional promoter.</title>
        <authorList>
            <person name="De Gobbi M."/>
            <person name="Viprakasit V."/>
            <person name="Hughes J.R."/>
            <person name="Fisher C."/>
            <person name="Buckle V.J."/>
            <person name="Ayyub H."/>
            <person name="Gibbons R.J."/>
            <person name="Vernimmen D."/>
            <person name="Yoshinaga Y."/>
            <person name="de Jong P."/>
            <person name="Cheng J.-F."/>
            <person name="Rubin E.M."/>
            <person name="Wood W.G."/>
            <person name="Bowden D."/>
            <person name="Higgs D.R."/>
        </authorList>
    </citation>
    <scope>NUCLEOTIDE SEQUENCE [GENOMIC DNA]</scope>
</reference>
<reference key="4">
    <citation type="journal article" date="2001" name="Hum. Mol. Genet.">
        <title>Sequence, structure and pathology of the fully annotated terminal 2 Mb of the short arm of human chromosome 16.</title>
        <authorList>
            <person name="Daniels R.J."/>
            <person name="Peden J.F."/>
            <person name="Lloyd C."/>
            <person name="Horsley S.W."/>
            <person name="Clark K."/>
            <person name="Tufarelli C."/>
            <person name="Kearney L."/>
            <person name="Buckle V.J."/>
            <person name="Doggett N.A."/>
            <person name="Flint J."/>
            <person name="Higgs D.R."/>
        </authorList>
    </citation>
    <scope>NUCLEOTIDE SEQUENCE [LARGE SCALE GENOMIC DNA]</scope>
</reference>
<reference key="5">
    <citation type="journal article" date="2004" name="Genome Res.">
        <title>The status, quality, and expansion of the NIH full-length cDNA project: the Mammalian Gene Collection (MGC).</title>
        <authorList>
            <consortium name="The MGC Project Team"/>
        </authorList>
    </citation>
    <scope>NUCLEOTIDE SEQUENCE [LARGE SCALE MRNA]</scope>
</reference>
<reference key="6">
    <citation type="journal article" date="1989" name="Nucleic Acids Res.">
        <title>Unique sequence organization and erythroid cell-specific nuclear factor-binding of mammalian theta 1 globin promoters.</title>
        <authorList>
            <person name="Kim J.H."/>
            <person name="Yu C.Y."/>
            <person name="Bailey A.D."/>
            <person name="Hardison R."/>
            <person name="Shen C.-K.J."/>
        </authorList>
    </citation>
    <scope>NUCLEOTIDE SEQUENCE [GENOMIC DNA] OF 1-14</scope>
    <source>
        <tissue>Liver</tissue>
    </source>
</reference>
<reference key="7">
    <citation type="journal article" date="2011" name="BMC Syst. Biol.">
        <title>Initial characterization of the human central proteome.</title>
        <authorList>
            <person name="Burkard T.R."/>
            <person name="Planyavsky M."/>
            <person name="Kaupe I."/>
            <person name="Breitwieser F.P."/>
            <person name="Buerckstuemmer T."/>
            <person name="Bennett K.L."/>
            <person name="Superti-Furga G."/>
            <person name="Colinge J."/>
        </authorList>
    </citation>
    <scope>IDENTIFICATION BY MASS SPECTROMETRY [LARGE SCALE ANALYSIS]</scope>
</reference>
<name>HBAT_HUMAN</name>
<comment type="interaction">
    <interactant intactId="EBI-10193656">
        <id>P09105</id>
    </interactant>
    <interactant intactId="EBI-2371423">
        <id>O43865</id>
        <label>AHCYL1</label>
    </interactant>
    <organismsDiffer>false</organismsDiffer>
    <experiments>6</experiments>
</comment>
<comment type="interaction">
    <interactant intactId="EBI-10193656">
        <id>P09105</id>
    </interactant>
    <interactant intactId="EBI-714680">
        <id>P69905</id>
        <label>HBA2</label>
    </interactant>
    <organismsDiffer>false</organismsDiffer>
    <experiments>3</experiments>
</comment>
<comment type="interaction">
    <interactant intactId="EBI-10193656">
        <id>P09105</id>
    </interactant>
    <interactant intactId="EBI-715554">
        <id>P68871</id>
        <label>HBB</label>
    </interactant>
    <organismsDiffer>false</organismsDiffer>
    <experiments>3</experiments>
</comment>
<comment type="interaction">
    <interactant intactId="EBI-10193656">
        <id>P09105</id>
    </interactant>
    <interactant intactId="EBI-6152722">
        <id>P02042</id>
        <label>HBD</label>
    </interactant>
    <organismsDiffer>false</organismsDiffer>
    <experiments>6</experiments>
</comment>
<comment type="interaction">
    <interactant intactId="EBI-10193656">
        <id>P09105</id>
    </interactant>
    <interactant intactId="EBI-6190240">
        <id>P02100</id>
        <label>HBE1</label>
    </interactant>
    <organismsDiffer>false</organismsDiffer>
    <experiments>3</experiments>
</comment>
<comment type="interaction">
    <interactant intactId="EBI-10193656">
        <id>P09105</id>
    </interactant>
    <interactant intactId="EBI-3910089">
        <id>P69892</id>
        <label>HBG2</label>
    </interactant>
    <organismsDiffer>false</organismsDiffer>
    <experiments>3</experiments>
</comment>
<comment type="interaction">
    <interactant intactId="EBI-10193656">
        <id>P09105</id>
    </interactant>
    <interactant intactId="EBI-719843">
        <id>P02008</id>
        <label>HBZ</label>
    </interactant>
    <organismsDiffer>false</organismsDiffer>
    <experiments>3</experiments>
</comment>
<comment type="interaction">
    <interactant intactId="EBI-10193656">
        <id>P09105</id>
    </interactant>
    <interactant intactId="EBI-741158">
        <id>Q96HA8</id>
        <label>NTAQ1</label>
    </interactant>
    <organismsDiffer>false</organismsDiffer>
    <experiments>3</experiments>
</comment>
<comment type="interaction">
    <interactant intactId="EBI-10193656">
        <id>P09105</id>
    </interactant>
    <interactant intactId="EBI-10271664">
        <id>Q8TAC1</id>
        <label>RFESD</label>
    </interactant>
    <organismsDiffer>false</organismsDiffer>
    <experiments>9</experiments>
</comment>
<comment type="similarity">
    <text evidence="1">Belongs to the globin family.</text>
</comment>
<sequence length="142" mass="15508">MALSAEDRALVRALWKKLGSNVGVYTTEALERTFLAFPATKTYFSHLDLSPGSSQVRAHGQKVADALSLAVERLDDLPHALSALSHLHACQLRVDPASFQLLGHCLLVTLARHYPGDFSPALQASLDKFLSHVISALVSEYR</sequence>
<keyword id="KW-0349">Heme</keyword>
<keyword id="KW-0408">Iron</keyword>
<keyword id="KW-0479">Metal-binding</keyword>
<keyword id="KW-0561">Oxygen transport</keyword>
<keyword id="KW-1267">Proteomics identification</keyword>
<keyword id="KW-1185">Reference proteome</keyword>
<keyword id="KW-0813">Transport</keyword>
<gene>
    <name type="primary">HBQ1</name>
</gene>
<organism>
    <name type="scientific">Homo sapiens</name>
    <name type="common">Human</name>
    <dbReference type="NCBI Taxonomy" id="9606"/>
    <lineage>
        <taxon>Eukaryota</taxon>
        <taxon>Metazoa</taxon>
        <taxon>Chordata</taxon>
        <taxon>Craniata</taxon>
        <taxon>Vertebrata</taxon>
        <taxon>Euteleostomi</taxon>
        <taxon>Mammalia</taxon>
        <taxon>Eutheria</taxon>
        <taxon>Euarchontoglires</taxon>
        <taxon>Primates</taxon>
        <taxon>Haplorrhini</taxon>
        <taxon>Catarrhini</taxon>
        <taxon>Hominidae</taxon>
        <taxon>Homo</taxon>
    </lineage>
</organism>
<proteinExistence type="evidence at protein level"/>